<organism>
    <name type="scientific">Listeria monocytogenes serovar 1/2a (strain ATCC BAA-679 / EGD-e)</name>
    <dbReference type="NCBI Taxonomy" id="169963"/>
    <lineage>
        <taxon>Bacteria</taxon>
        <taxon>Bacillati</taxon>
        <taxon>Bacillota</taxon>
        <taxon>Bacilli</taxon>
        <taxon>Bacillales</taxon>
        <taxon>Listeriaceae</taxon>
        <taxon>Listeria</taxon>
    </lineage>
</organism>
<accession>Q8Y8Q9</accession>
<name>PSIE_LISMO</name>
<gene>
    <name evidence="1" type="primary">psiE</name>
    <name type="ordered locus">lmo0836</name>
</gene>
<reference key="1">
    <citation type="journal article" date="2001" name="Science">
        <title>Comparative genomics of Listeria species.</title>
        <authorList>
            <person name="Glaser P."/>
            <person name="Frangeul L."/>
            <person name="Buchrieser C."/>
            <person name="Rusniok C."/>
            <person name="Amend A."/>
            <person name="Baquero F."/>
            <person name="Berche P."/>
            <person name="Bloecker H."/>
            <person name="Brandt P."/>
            <person name="Chakraborty T."/>
            <person name="Charbit A."/>
            <person name="Chetouani F."/>
            <person name="Couve E."/>
            <person name="de Daruvar A."/>
            <person name="Dehoux P."/>
            <person name="Domann E."/>
            <person name="Dominguez-Bernal G."/>
            <person name="Duchaud E."/>
            <person name="Durant L."/>
            <person name="Dussurget O."/>
            <person name="Entian K.-D."/>
            <person name="Fsihi H."/>
            <person name="Garcia-del Portillo F."/>
            <person name="Garrido P."/>
            <person name="Gautier L."/>
            <person name="Goebel W."/>
            <person name="Gomez-Lopez N."/>
            <person name="Hain T."/>
            <person name="Hauf J."/>
            <person name="Jackson D."/>
            <person name="Jones L.-M."/>
            <person name="Kaerst U."/>
            <person name="Kreft J."/>
            <person name="Kuhn M."/>
            <person name="Kunst F."/>
            <person name="Kurapkat G."/>
            <person name="Madueno E."/>
            <person name="Maitournam A."/>
            <person name="Mata Vicente J."/>
            <person name="Ng E."/>
            <person name="Nedjari H."/>
            <person name="Nordsiek G."/>
            <person name="Novella S."/>
            <person name="de Pablos B."/>
            <person name="Perez-Diaz J.-C."/>
            <person name="Purcell R."/>
            <person name="Remmel B."/>
            <person name="Rose M."/>
            <person name="Schlueter T."/>
            <person name="Simoes N."/>
            <person name="Tierrez A."/>
            <person name="Vazquez-Boland J.-A."/>
            <person name="Voss H."/>
            <person name="Wehland J."/>
            <person name="Cossart P."/>
        </authorList>
    </citation>
    <scope>NUCLEOTIDE SEQUENCE [LARGE SCALE GENOMIC DNA]</scope>
    <source>
        <strain>ATCC BAA-679 / EGD-e</strain>
    </source>
</reference>
<keyword id="KW-1003">Cell membrane</keyword>
<keyword id="KW-0472">Membrane</keyword>
<keyword id="KW-1185">Reference proteome</keyword>
<keyword id="KW-0812">Transmembrane</keyword>
<keyword id="KW-1133">Transmembrane helix</keyword>
<evidence type="ECO:0000255" key="1">
    <source>
        <dbReference type="HAMAP-Rule" id="MF_01048"/>
    </source>
</evidence>
<sequence length="137" mass="15894">MKRLEKISSIVPILLRITLNLALIMVGFTLVAFLIREAFTIFNNIFFLDTDVSYYYMTQDILTFFLYFEFIALIVKYFESHFHFPLRYFIYIGITAIIRFIIVDHSSATSTLILSGAILLLVAALFLANTKMLKREG</sequence>
<feature type="chain" id="PRO_0000160290" description="Protein PsiE homolog">
    <location>
        <begin position="1"/>
        <end position="137"/>
    </location>
</feature>
<feature type="transmembrane region" description="Helical" evidence="1">
    <location>
        <begin position="15"/>
        <end position="35"/>
    </location>
</feature>
<feature type="transmembrane region" description="Helical" evidence="1">
    <location>
        <begin position="55"/>
        <end position="75"/>
    </location>
</feature>
<feature type="transmembrane region" description="Helical" evidence="1">
    <location>
        <begin position="82"/>
        <end position="102"/>
    </location>
</feature>
<feature type="transmembrane region" description="Helical" evidence="1">
    <location>
        <begin position="108"/>
        <end position="128"/>
    </location>
</feature>
<comment type="subcellular location">
    <subcellularLocation>
        <location evidence="1">Cell membrane</location>
        <topology evidence="1">Multi-pass membrane protein</topology>
    </subcellularLocation>
</comment>
<comment type="similarity">
    <text evidence="1">Belongs to the PsiE family.</text>
</comment>
<protein>
    <recommendedName>
        <fullName evidence="1">Protein PsiE homolog</fullName>
    </recommendedName>
</protein>
<dbReference type="EMBL" id="AL591976">
    <property type="protein sequence ID" value="CAC98914.1"/>
    <property type="molecule type" value="Genomic_DNA"/>
</dbReference>
<dbReference type="PIR" id="AD1179">
    <property type="entry name" value="AD1179"/>
</dbReference>
<dbReference type="RefSeq" id="NP_464363.1">
    <property type="nucleotide sequence ID" value="NC_003210.1"/>
</dbReference>
<dbReference type="RefSeq" id="WP_003721401.1">
    <property type="nucleotide sequence ID" value="NZ_CP149495.1"/>
</dbReference>
<dbReference type="SMR" id="Q8Y8Q9"/>
<dbReference type="STRING" id="169963.gene:17593487"/>
<dbReference type="PaxDb" id="169963-lmo0836"/>
<dbReference type="EnsemblBacteria" id="CAC98914">
    <property type="protein sequence ID" value="CAC98914"/>
    <property type="gene ID" value="CAC98914"/>
</dbReference>
<dbReference type="GeneID" id="61188719"/>
<dbReference type="GeneID" id="985351"/>
<dbReference type="KEGG" id="lmo:lmo0836"/>
<dbReference type="PATRIC" id="fig|169963.11.peg.859"/>
<dbReference type="eggNOG" id="COG3223">
    <property type="taxonomic scope" value="Bacteria"/>
</dbReference>
<dbReference type="HOGENOM" id="CLU_127561_0_0_9"/>
<dbReference type="OrthoDB" id="9792470at2"/>
<dbReference type="PhylomeDB" id="Q8Y8Q9"/>
<dbReference type="BioCyc" id="LMON169963:LMO0836-MONOMER"/>
<dbReference type="Proteomes" id="UP000000817">
    <property type="component" value="Chromosome"/>
</dbReference>
<dbReference type="GO" id="GO:0005886">
    <property type="term" value="C:plasma membrane"/>
    <property type="evidence" value="ECO:0000318"/>
    <property type="project" value="GO_Central"/>
</dbReference>
<dbReference type="GO" id="GO:0016036">
    <property type="term" value="P:cellular response to phosphate starvation"/>
    <property type="evidence" value="ECO:0007669"/>
    <property type="project" value="InterPro"/>
</dbReference>
<dbReference type="HAMAP" id="MF_01048">
    <property type="entry name" value="PsiE"/>
    <property type="match status" value="1"/>
</dbReference>
<dbReference type="InterPro" id="IPR009315">
    <property type="entry name" value="P_starv_induced_PsiE"/>
</dbReference>
<dbReference type="InterPro" id="IPR020948">
    <property type="entry name" value="P_starv_induced_PsiE-like"/>
</dbReference>
<dbReference type="NCBIfam" id="NF002765">
    <property type="entry name" value="PRK02833.1-3"/>
    <property type="match status" value="1"/>
</dbReference>
<dbReference type="NCBIfam" id="NF002766">
    <property type="entry name" value="PRK02833.1-4"/>
    <property type="match status" value="1"/>
</dbReference>
<dbReference type="PANTHER" id="PTHR37819">
    <property type="entry name" value="PROTEIN PSIE"/>
    <property type="match status" value="1"/>
</dbReference>
<dbReference type="PANTHER" id="PTHR37819:SF1">
    <property type="entry name" value="PROTEIN PSIE"/>
    <property type="match status" value="1"/>
</dbReference>
<dbReference type="Pfam" id="PF06146">
    <property type="entry name" value="PsiE"/>
    <property type="match status" value="1"/>
</dbReference>
<dbReference type="PIRSF" id="PIRSF029598">
    <property type="entry name" value="PsiE"/>
    <property type="match status" value="1"/>
</dbReference>
<proteinExistence type="inferred from homology"/>